<sequence length="38" mass="4497">MTQSNPNEQNVELNRTSLYWGLLLIFVLAVLFSNYFFN</sequence>
<proteinExistence type="inferred from homology"/>
<dbReference type="EMBL" id="AY007485">
    <property type="protein sequence ID" value="AAG27024.1"/>
    <property type="molecule type" value="Genomic_DNA"/>
</dbReference>
<dbReference type="RefSeq" id="YP_009378428.1">
    <property type="nucleotide sequence ID" value="NC_034908.1"/>
</dbReference>
<dbReference type="SMR" id="Q7HIT8"/>
<dbReference type="GeneID" id="32956300"/>
<dbReference type="GO" id="GO:0009535">
    <property type="term" value="C:chloroplast thylakoid membrane"/>
    <property type="evidence" value="ECO:0007669"/>
    <property type="project" value="UniProtKB-SubCell"/>
</dbReference>
<dbReference type="GO" id="GO:0009539">
    <property type="term" value="C:photosystem II reaction center"/>
    <property type="evidence" value="ECO:0007669"/>
    <property type="project" value="InterPro"/>
</dbReference>
<dbReference type="GO" id="GO:0015979">
    <property type="term" value="P:photosynthesis"/>
    <property type="evidence" value="ECO:0007669"/>
    <property type="project" value="UniProtKB-UniRule"/>
</dbReference>
<dbReference type="HAMAP" id="MF_01317">
    <property type="entry name" value="PSII_PsbL"/>
    <property type="match status" value="1"/>
</dbReference>
<dbReference type="InterPro" id="IPR003372">
    <property type="entry name" value="PSII_PsbL"/>
</dbReference>
<dbReference type="InterPro" id="IPR037266">
    <property type="entry name" value="PSII_PsbL_sf"/>
</dbReference>
<dbReference type="NCBIfam" id="NF001972">
    <property type="entry name" value="PRK00753.1"/>
    <property type="match status" value="1"/>
</dbReference>
<dbReference type="Pfam" id="PF02419">
    <property type="entry name" value="PsbL"/>
    <property type="match status" value="1"/>
</dbReference>
<dbReference type="SUPFAM" id="SSF161017">
    <property type="entry name" value="Photosystem II reaction center protein L, PsbL"/>
    <property type="match status" value="1"/>
</dbReference>
<accession>Q7HIT8</accession>
<gene>
    <name evidence="1" type="primary">psbL</name>
</gene>
<organism>
    <name type="scientific">Schisandra chinensis</name>
    <name type="common">Chinese magnolia vine</name>
    <name type="synonym">Kadsura chinensis</name>
    <dbReference type="NCBI Taxonomy" id="50507"/>
    <lineage>
        <taxon>Eukaryota</taxon>
        <taxon>Viridiplantae</taxon>
        <taxon>Streptophyta</taxon>
        <taxon>Embryophyta</taxon>
        <taxon>Tracheophyta</taxon>
        <taxon>Spermatophyta</taxon>
        <taxon>Magnoliopsida</taxon>
        <taxon>Austrobaileyales</taxon>
        <taxon>Schisandraceae</taxon>
        <taxon>Schisandra</taxon>
    </lineage>
</organism>
<protein>
    <recommendedName>
        <fullName evidence="1">Photosystem II reaction center protein L</fullName>
        <shortName evidence="1">PSII-L</shortName>
    </recommendedName>
</protein>
<reference key="1">
    <citation type="submission" date="2000-02" db="EMBL/GenBank/DDBJ databases">
        <title>Long branches in the seed plants and the root of the angiosperms.</title>
        <authorList>
            <person name="Graham S.W."/>
            <person name="Reeves P.A."/>
            <person name="Burns A."/>
            <person name="Olmstead R.G."/>
        </authorList>
    </citation>
    <scope>NUCLEOTIDE SEQUENCE [GENOMIC DNA]</scope>
</reference>
<feature type="chain" id="PRO_0000219768" description="Photosystem II reaction center protein L">
    <location>
        <begin position="1"/>
        <end position="38"/>
    </location>
</feature>
<feature type="transmembrane region" description="Helical" evidence="1">
    <location>
        <begin position="17"/>
        <end position="37"/>
    </location>
</feature>
<name>PSBL_SCHCH</name>
<geneLocation type="chloroplast"/>
<evidence type="ECO:0000255" key="1">
    <source>
        <dbReference type="HAMAP-Rule" id="MF_01317"/>
    </source>
</evidence>
<keyword id="KW-0150">Chloroplast</keyword>
<keyword id="KW-0472">Membrane</keyword>
<keyword id="KW-0602">Photosynthesis</keyword>
<keyword id="KW-0604">Photosystem II</keyword>
<keyword id="KW-0934">Plastid</keyword>
<keyword id="KW-0674">Reaction center</keyword>
<keyword id="KW-0793">Thylakoid</keyword>
<keyword id="KW-0812">Transmembrane</keyword>
<keyword id="KW-1133">Transmembrane helix</keyword>
<comment type="function">
    <text evidence="1">One of the components of the core complex of photosystem II (PSII). PSII is a light-driven water:plastoquinone oxidoreductase that uses light energy to abstract electrons from H(2)O, generating O(2) and a proton gradient subsequently used for ATP formation. It consists of a core antenna complex that captures photons, and an electron transfer chain that converts photonic excitation into a charge separation. This subunit is found at the monomer-monomer interface and is required for correct PSII assembly and/or dimerization.</text>
</comment>
<comment type="subunit">
    <text evidence="1">PSII is composed of 1 copy each of membrane proteins PsbA, PsbB, PsbC, PsbD, PsbE, PsbF, PsbH, PsbI, PsbJ, PsbK, PsbL, PsbM, PsbT, PsbX, PsbY, PsbZ, Psb30/Ycf12, at least 3 peripheral proteins of the oxygen-evolving complex and a large number of cofactors. It forms dimeric complexes.</text>
</comment>
<comment type="subcellular location">
    <subcellularLocation>
        <location evidence="1">Plastid</location>
        <location evidence="1">Chloroplast thylakoid membrane</location>
        <topology evidence="1">Single-pass membrane protein</topology>
    </subcellularLocation>
</comment>
<comment type="similarity">
    <text evidence="1">Belongs to the PsbL family.</text>
</comment>